<organism>
    <name type="scientific">Drosophila willistoni</name>
    <name type="common">Fruit fly</name>
    <dbReference type="NCBI Taxonomy" id="7260"/>
    <lineage>
        <taxon>Eukaryota</taxon>
        <taxon>Metazoa</taxon>
        <taxon>Ecdysozoa</taxon>
        <taxon>Arthropoda</taxon>
        <taxon>Hexapoda</taxon>
        <taxon>Insecta</taxon>
        <taxon>Pterygota</taxon>
        <taxon>Neoptera</taxon>
        <taxon>Endopterygota</taxon>
        <taxon>Diptera</taxon>
        <taxon>Brachycera</taxon>
        <taxon>Muscomorpha</taxon>
        <taxon>Ephydroidea</taxon>
        <taxon>Drosophilidae</taxon>
        <taxon>Drosophila</taxon>
        <taxon>Sophophora</taxon>
    </lineage>
</organism>
<keyword id="KW-0456">Lyase</keyword>
<keyword id="KW-0472">Membrane</keyword>
<keyword id="KW-0479">Metal-binding</keyword>
<keyword id="KW-0496">Mitochondrion</keyword>
<keyword id="KW-0999">Mitochondrion inner membrane</keyword>
<keyword id="KW-1185">Reference proteome</keyword>
<keyword id="KW-0831">Ubiquinone biosynthesis</keyword>
<keyword id="KW-0862">Zinc</keyword>
<name>COQ4_DROWI</name>
<sequence>MMQRLRLARRGLALSAVRRQTVVPEEEPLDAYEREHLKHRIEITPFQRMLLGAGSSVAAILDPRRHDMIACLGETTGEGALWNILDTMEASEEGQRILIDKPRIHTSTIDFKRLETLPPDTFGAAYVKFLKDNNVTPDSRMPVRFLEDPKLAYLMTRYRECHDLIHTVLNMPTNMLGEVAVKWVEALNTNLPMCYGGAVFGAVRLRPKQRREYLKRYLPWAIDNGKRMKPLMPVYWEQRWEQNLDLAKKTSPIMLPALRITRRDG</sequence>
<gene>
    <name type="ORF">GK18052</name>
</gene>
<reference key="1">
    <citation type="journal article" date="2007" name="Nature">
        <title>Evolution of genes and genomes on the Drosophila phylogeny.</title>
        <authorList>
            <consortium name="Drosophila 12 genomes consortium"/>
        </authorList>
    </citation>
    <scope>NUCLEOTIDE SEQUENCE [LARGE SCALE GENOMIC DNA]</scope>
    <source>
        <strain>Tucson 14030-0811.24</strain>
    </source>
</reference>
<comment type="function">
    <text evidence="1">Lyase that catalyzes the C1-decarboxylation of 4-hydroxy-3-methoxy-5-(all-trans-polyprenyl)benzoic acid into 2-methoxy-6-(all-trans-polyprenyl)phenol during ubiquinone biosynthesis.</text>
</comment>
<comment type="catalytic activity">
    <reaction evidence="1">
        <text>a 4-hydroxy-3-methoxy-5-(all-trans-polyprenyl)benzoate + H(+) = a 2-methoxy-6-(all-trans-polyprenyl)phenol + CO2</text>
        <dbReference type="Rhea" id="RHEA:81179"/>
        <dbReference type="Rhea" id="RHEA-COMP:9551"/>
        <dbReference type="Rhea" id="RHEA-COMP:10931"/>
        <dbReference type="ChEBI" id="CHEBI:15378"/>
        <dbReference type="ChEBI" id="CHEBI:16526"/>
        <dbReference type="ChEBI" id="CHEBI:62731"/>
        <dbReference type="ChEBI" id="CHEBI:84443"/>
        <dbReference type="EC" id="4.1.1.130"/>
    </reaction>
</comment>
<comment type="cofactor">
    <cofactor evidence="1">
        <name>Zn(2+)</name>
        <dbReference type="ChEBI" id="CHEBI:29105"/>
    </cofactor>
</comment>
<comment type="pathway">
    <text evidence="1">Cofactor biosynthesis; ubiquinone biosynthesis.</text>
</comment>
<comment type="subunit">
    <text evidence="1">Component of a multi-subunit COQ enzyme complex.</text>
</comment>
<comment type="subcellular location">
    <subcellularLocation>
        <location evidence="1">Mitochondrion inner membrane</location>
        <topology evidence="1">Peripheral membrane protein</topology>
        <orientation evidence="1">Matrix side</orientation>
    </subcellularLocation>
</comment>
<comment type="miscellaneous">
    <text evidence="1">This protein may be expected to contain an N-terminal transit peptide but none has been predicted.</text>
</comment>
<comment type="similarity">
    <text evidence="1">Belongs to the COQ4 family.</text>
</comment>
<evidence type="ECO:0000255" key="1">
    <source>
        <dbReference type="HAMAP-Rule" id="MF_03111"/>
    </source>
</evidence>
<accession>B4N6G2</accession>
<proteinExistence type="inferred from homology"/>
<protein>
    <recommendedName>
        <fullName evidence="1">Ubiquinone biosynthesis protein COQ4 homolog, mitochondrial</fullName>
    </recommendedName>
    <alternativeName>
        <fullName>4-hydroxy-3-methoxy-5-polyprenylbenzoate decarboxylase</fullName>
        <ecNumber evidence="1">4.1.1.130</ecNumber>
    </alternativeName>
    <alternativeName>
        <fullName evidence="1">Coenzyme Q biosynthesis protein 4 homolog</fullName>
    </alternativeName>
</protein>
<feature type="chain" id="PRO_0000388070" description="Ubiquinone biosynthesis protein COQ4 homolog, mitochondrial">
    <location>
        <begin position="1"/>
        <end position="265"/>
    </location>
</feature>
<feature type="binding site" evidence="1">
    <location>
        <position position="162"/>
    </location>
    <ligand>
        <name>Zn(2+)</name>
        <dbReference type="ChEBI" id="CHEBI:29105"/>
    </ligand>
</feature>
<feature type="binding site" evidence="1">
    <location>
        <position position="163"/>
    </location>
    <ligand>
        <name>Zn(2+)</name>
        <dbReference type="ChEBI" id="CHEBI:29105"/>
    </ligand>
</feature>
<feature type="binding site" evidence="1">
    <location>
        <position position="166"/>
    </location>
    <ligand>
        <name>Zn(2+)</name>
        <dbReference type="ChEBI" id="CHEBI:29105"/>
    </ligand>
</feature>
<feature type="binding site" evidence="1">
    <location>
        <position position="178"/>
    </location>
    <ligand>
        <name>Zn(2+)</name>
        <dbReference type="ChEBI" id="CHEBI:29105"/>
    </ligand>
</feature>
<dbReference type="EC" id="4.1.1.130" evidence="1"/>
<dbReference type="EMBL" id="CH964154">
    <property type="protein sequence ID" value="EDW79951.1"/>
    <property type="molecule type" value="Genomic_DNA"/>
</dbReference>
<dbReference type="SMR" id="B4N6G2"/>
<dbReference type="STRING" id="7260.B4N6G2"/>
<dbReference type="GeneID" id="6646144"/>
<dbReference type="KEGG" id="dwi:6646144"/>
<dbReference type="eggNOG" id="KOG3244">
    <property type="taxonomic scope" value="Eukaryota"/>
</dbReference>
<dbReference type="HOGENOM" id="CLU_061241_1_1_1"/>
<dbReference type="OMA" id="YYERHFH"/>
<dbReference type="OrthoDB" id="4249at2759"/>
<dbReference type="PhylomeDB" id="B4N6G2"/>
<dbReference type="UniPathway" id="UPA00232"/>
<dbReference type="Proteomes" id="UP000007798">
    <property type="component" value="Unassembled WGS sequence"/>
</dbReference>
<dbReference type="GO" id="GO:0031314">
    <property type="term" value="C:extrinsic component of mitochondrial inner membrane"/>
    <property type="evidence" value="ECO:0007669"/>
    <property type="project" value="UniProtKB-UniRule"/>
</dbReference>
<dbReference type="GO" id="GO:0006744">
    <property type="term" value="P:ubiquinone biosynthetic process"/>
    <property type="evidence" value="ECO:0007669"/>
    <property type="project" value="UniProtKB-UniRule"/>
</dbReference>
<dbReference type="HAMAP" id="MF_03111">
    <property type="entry name" value="Coq4"/>
    <property type="match status" value="1"/>
</dbReference>
<dbReference type="InterPro" id="IPR007715">
    <property type="entry name" value="Coq4"/>
</dbReference>
<dbReference type="InterPro" id="IPR027540">
    <property type="entry name" value="Coq4_euk"/>
</dbReference>
<dbReference type="PANTHER" id="PTHR12922">
    <property type="entry name" value="UBIQUINONE BIOSYNTHESIS PROTEIN"/>
    <property type="match status" value="1"/>
</dbReference>
<dbReference type="PANTHER" id="PTHR12922:SF7">
    <property type="entry name" value="UBIQUINONE BIOSYNTHESIS PROTEIN COQ4 HOMOLOG, MITOCHONDRIAL"/>
    <property type="match status" value="1"/>
</dbReference>
<dbReference type="Pfam" id="PF05019">
    <property type="entry name" value="Coq4"/>
    <property type="match status" value="1"/>
</dbReference>